<organism>
    <name type="scientific">Erythrobacter litoralis (strain HTCC2594)</name>
    <dbReference type="NCBI Taxonomy" id="314225"/>
    <lineage>
        <taxon>Bacteria</taxon>
        <taxon>Pseudomonadati</taxon>
        <taxon>Pseudomonadota</taxon>
        <taxon>Alphaproteobacteria</taxon>
        <taxon>Sphingomonadales</taxon>
        <taxon>Erythrobacteraceae</taxon>
        <taxon>Erythrobacter/Porphyrobacter group</taxon>
        <taxon>Erythrobacter</taxon>
    </lineage>
</organism>
<reference key="1">
    <citation type="journal article" date="2009" name="J. Bacteriol.">
        <title>Complete genome sequence of Erythrobacter litoralis HTCC2594.</title>
        <authorList>
            <person name="Oh H.M."/>
            <person name="Giovannoni S.J."/>
            <person name="Ferriera S."/>
            <person name="Johnson J."/>
            <person name="Cho J.C."/>
        </authorList>
    </citation>
    <scope>NUCLEOTIDE SEQUENCE [LARGE SCALE GENOMIC DNA]</scope>
    <source>
        <strain>HTCC2594</strain>
    </source>
</reference>
<proteinExistence type="inferred from homology"/>
<sequence>MPTINQLVRKGRVPQKAKSKVPAMEQNPQKRGVCTRVYTTTPKKPNSALRKVAKVRLTNQREVISYIPGEGHNLQEHSVVLIRGGRVRDLPGVRYHVLRGVLDTQGVKDRKQSRSKYGAKRPK</sequence>
<comment type="function">
    <text evidence="2">With S4 and S5 plays an important role in translational accuracy.</text>
</comment>
<comment type="function">
    <text evidence="2">Interacts with and stabilizes bases of the 16S rRNA that are involved in tRNA selection in the A site and with the mRNA backbone. Located at the interface of the 30S and 50S subunits, it traverses the body of the 30S subunit contacting proteins on the other side and probably holding the rRNA structure together. The combined cluster of proteins S8, S12 and S17 appears to hold together the shoulder and platform of the 30S subunit.</text>
</comment>
<comment type="subunit">
    <text evidence="2">Part of the 30S ribosomal subunit. Contacts proteins S8 and S17. May interact with IF1 in the 30S initiation complex.</text>
</comment>
<comment type="similarity">
    <text evidence="2">Belongs to the universal ribosomal protein uS12 family.</text>
</comment>
<dbReference type="EMBL" id="CP000157">
    <property type="protein sequence ID" value="ABC63736.1"/>
    <property type="molecule type" value="Genomic_DNA"/>
</dbReference>
<dbReference type="RefSeq" id="WP_006831873.1">
    <property type="nucleotide sequence ID" value="NC_007722.1"/>
</dbReference>
<dbReference type="SMR" id="Q2N9A5"/>
<dbReference type="STRING" id="314225.ELI_08220"/>
<dbReference type="GeneID" id="93685915"/>
<dbReference type="KEGG" id="eli:ELI_08220"/>
<dbReference type="eggNOG" id="COG0048">
    <property type="taxonomic scope" value="Bacteria"/>
</dbReference>
<dbReference type="HOGENOM" id="CLU_104295_1_2_5"/>
<dbReference type="OrthoDB" id="9802366at2"/>
<dbReference type="Proteomes" id="UP000008808">
    <property type="component" value="Chromosome"/>
</dbReference>
<dbReference type="GO" id="GO:0015935">
    <property type="term" value="C:small ribosomal subunit"/>
    <property type="evidence" value="ECO:0007669"/>
    <property type="project" value="InterPro"/>
</dbReference>
<dbReference type="GO" id="GO:0019843">
    <property type="term" value="F:rRNA binding"/>
    <property type="evidence" value="ECO:0007669"/>
    <property type="project" value="UniProtKB-UniRule"/>
</dbReference>
<dbReference type="GO" id="GO:0003735">
    <property type="term" value="F:structural constituent of ribosome"/>
    <property type="evidence" value="ECO:0007669"/>
    <property type="project" value="InterPro"/>
</dbReference>
<dbReference type="GO" id="GO:0000049">
    <property type="term" value="F:tRNA binding"/>
    <property type="evidence" value="ECO:0007669"/>
    <property type="project" value="UniProtKB-UniRule"/>
</dbReference>
<dbReference type="GO" id="GO:0006412">
    <property type="term" value="P:translation"/>
    <property type="evidence" value="ECO:0007669"/>
    <property type="project" value="UniProtKB-UniRule"/>
</dbReference>
<dbReference type="CDD" id="cd03368">
    <property type="entry name" value="Ribosomal_S12"/>
    <property type="match status" value="1"/>
</dbReference>
<dbReference type="FunFam" id="2.40.50.140:FF:000001">
    <property type="entry name" value="30S ribosomal protein S12"/>
    <property type="match status" value="1"/>
</dbReference>
<dbReference type="Gene3D" id="2.40.50.140">
    <property type="entry name" value="Nucleic acid-binding proteins"/>
    <property type="match status" value="1"/>
</dbReference>
<dbReference type="HAMAP" id="MF_00403_B">
    <property type="entry name" value="Ribosomal_uS12_B"/>
    <property type="match status" value="1"/>
</dbReference>
<dbReference type="InterPro" id="IPR012340">
    <property type="entry name" value="NA-bd_OB-fold"/>
</dbReference>
<dbReference type="InterPro" id="IPR006032">
    <property type="entry name" value="Ribosomal_uS12"/>
</dbReference>
<dbReference type="InterPro" id="IPR005679">
    <property type="entry name" value="Ribosomal_uS12_bac"/>
</dbReference>
<dbReference type="NCBIfam" id="TIGR00981">
    <property type="entry name" value="rpsL_bact"/>
    <property type="match status" value="1"/>
</dbReference>
<dbReference type="PANTHER" id="PTHR11652">
    <property type="entry name" value="30S RIBOSOMAL PROTEIN S12 FAMILY MEMBER"/>
    <property type="match status" value="1"/>
</dbReference>
<dbReference type="Pfam" id="PF00164">
    <property type="entry name" value="Ribosom_S12_S23"/>
    <property type="match status" value="1"/>
</dbReference>
<dbReference type="PIRSF" id="PIRSF002133">
    <property type="entry name" value="Ribosomal_S12/S23"/>
    <property type="match status" value="1"/>
</dbReference>
<dbReference type="PRINTS" id="PR01034">
    <property type="entry name" value="RIBOSOMALS12"/>
</dbReference>
<dbReference type="SUPFAM" id="SSF50249">
    <property type="entry name" value="Nucleic acid-binding proteins"/>
    <property type="match status" value="1"/>
</dbReference>
<dbReference type="PROSITE" id="PS00055">
    <property type="entry name" value="RIBOSOMAL_S12"/>
    <property type="match status" value="1"/>
</dbReference>
<accession>Q2N9A5</accession>
<evidence type="ECO:0000250" key="1"/>
<evidence type="ECO:0000255" key="2">
    <source>
        <dbReference type="HAMAP-Rule" id="MF_00403"/>
    </source>
</evidence>
<evidence type="ECO:0000256" key="3">
    <source>
        <dbReference type="SAM" id="MobiDB-lite"/>
    </source>
</evidence>
<evidence type="ECO:0000305" key="4"/>
<feature type="chain" id="PRO_0000295976" description="Small ribosomal subunit protein uS12">
    <location>
        <begin position="1"/>
        <end position="123"/>
    </location>
</feature>
<feature type="region of interest" description="Disordered" evidence="3">
    <location>
        <begin position="1"/>
        <end position="29"/>
    </location>
</feature>
<feature type="compositionally biased region" description="Basic residues" evidence="3">
    <location>
        <begin position="9"/>
        <end position="19"/>
    </location>
</feature>
<feature type="modified residue" description="3-methylthioaspartic acid" evidence="1">
    <location>
        <position position="89"/>
    </location>
</feature>
<protein>
    <recommendedName>
        <fullName evidence="2">Small ribosomal subunit protein uS12</fullName>
    </recommendedName>
    <alternativeName>
        <fullName evidence="4">30S ribosomal protein S12</fullName>
    </alternativeName>
</protein>
<gene>
    <name evidence="2" type="primary">rpsL</name>
    <name type="ordered locus">ELI_08220</name>
</gene>
<keyword id="KW-0488">Methylation</keyword>
<keyword id="KW-1185">Reference proteome</keyword>
<keyword id="KW-0687">Ribonucleoprotein</keyword>
<keyword id="KW-0689">Ribosomal protein</keyword>
<keyword id="KW-0694">RNA-binding</keyword>
<keyword id="KW-0699">rRNA-binding</keyword>
<keyword id="KW-0820">tRNA-binding</keyword>
<name>RS12_ERYLH</name>